<protein>
    <recommendedName>
        <fullName evidence="1">Glycine--tRNA ligase beta subunit</fullName>
        <ecNumber evidence="1">6.1.1.14</ecNumber>
    </recommendedName>
    <alternativeName>
        <fullName evidence="1">Glycyl-tRNA synthetase beta subunit</fullName>
        <shortName evidence="1">GlyRS</shortName>
    </alternativeName>
</protein>
<accession>Q87TP8</accession>
<gene>
    <name evidence="1" type="primary">glyS</name>
    <name type="ordered locus">VP0021</name>
</gene>
<comment type="catalytic activity">
    <reaction evidence="1">
        <text>tRNA(Gly) + glycine + ATP = glycyl-tRNA(Gly) + AMP + diphosphate</text>
        <dbReference type="Rhea" id="RHEA:16013"/>
        <dbReference type="Rhea" id="RHEA-COMP:9664"/>
        <dbReference type="Rhea" id="RHEA-COMP:9683"/>
        <dbReference type="ChEBI" id="CHEBI:30616"/>
        <dbReference type="ChEBI" id="CHEBI:33019"/>
        <dbReference type="ChEBI" id="CHEBI:57305"/>
        <dbReference type="ChEBI" id="CHEBI:78442"/>
        <dbReference type="ChEBI" id="CHEBI:78522"/>
        <dbReference type="ChEBI" id="CHEBI:456215"/>
        <dbReference type="EC" id="6.1.1.14"/>
    </reaction>
</comment>
<comment type="subunit">
    <text evidence="1">Tetramer of two alpha and two beta subunits.</text>
</comment>
<comment type="subcellular location">
    <subcellularLocation>
        <location evidence="1">Cytoplasm</location>
    </subcellularLocation>
</comment>
<comment type="similarity">
    <text evidence="1">Belongs to the class-II aminoacyl-tRNA synthetase family.</text>
</comment>
<dbReference type="EC" id="6.1.1.14" evidence="1"/>
<dbReference type="EMBL" id="BA000031">
    <property type="protein sequence ID" value="BAC58284.1"/>
    <property type="molecule type" value="Genomic_DNA"/>
</dbReference>
<dbReference type="RefSeq" id="NP_796400.1">
    <property type="nucleotide sequence ID" value="NC_004603.1"/>
</dbReference>
<dbReference type="RefSeq" id="WP_005458686.1">
    <property type="nucleotide sequence ID" value="NC_004603.1"/>
</dbReference>
<dbReference type="SMR" id="Q87TP8"/>
<dbReference type="GeneID" id="1187477"/>
<dbReference type="KEGG" id="vpa:VP0021"/>
<dbReference type="PATRIC" id="fig|223926.6.peg.21"/>
<dbReference type="eggNOG" id="COG0751">
    <property type="taxonomic scope" value="Bacteria"/>
</dbReference>
<dbReference type="HOGENOM" id="CLU_007220_2_2_6"/>
<dbReference type="Proteomes" id="UP000002493">
    <property type="component" value="Chromosome 1"/>
</dbReference>
<dbReference type="GO" id="GO:0005829">
    <property type="term" value="C:cytosol"/>
    <property type="evidence" value="ECO:0007669"/>
    <property type="project" value="TreeGrafter"/>
</dbReference>
<dbReference type="GO" id="GO:0004814">
    <property type="term" value="F:arginine-tRNA ligase activity"/>
    <property type="evidence" value="ECO:0007669"/>
    <property type="project" value="InterPro"/>
</dbReference>
<dbReference type="GO" id="GO:0005524">
    <property type="term" value="F:ATP binding"/>
    <property type="evidence" value="ECO:0007669"/>
    <property type="project" value="UniProtKB-UniRule"/>
</dbReference>
<dbReference type="GO" id="GO:0004820">
    <property type="term" value="F:glycine-tRNA ligase activity"/>
    <property type="evidence" value="ECO:0007669"/>
    <property type="project" value="UniProtKB-UniRule"/>
</dbReference>
<dbReference type="GO" id="GO:0006420">
    <property type="term" value="P:arginyl-tRNA aminoacylation"/>
    <property type="evidence" value="ECO:0007669"/>
    <property type="project" value="InterPro"/>
</dbReference>
<dbReference type="GO" id="GO:0006426">
    <property type="term" value="P:glycyl-tRNA aminoacylation"/>
    <property type="evidence" value="ECO:0007669"/>
    <property type="project" value="UniProtKB-UniRule"/>
</dbReference>
<dbReference type="Gene3D" id="1.10.730.10">
    <property type="entry name" value="Isoleucyl-tRNA Synthetase, Domain 1"/>
    <property type="match status" value="1"/>
</dbReference>
<dbReference type="HAMAP" id="MF_00255">
    <property type="entry name" value="Gly_tRNA_synth_beta"/>
    <property type="match status" value="1"/>
</dbReference>
<dbReference type="InterPro" id="IPR008909">
    <property type="entry name" value="DALR_anticod-bd"/>
</dbReference>
<dbReference type="InterPro" id="IPR015944">
    <property type="entry name" value="Gly-tRNA-synth_bsu"/>
</dbReference>
<dbReference type="InterPro" id="IPR006194">
    <property type="entry name" value="Gly-tRNA-synth_heterodimer"/>
</dbReference>
<dbReference type="NCBIfam" id="TIGR00211">
    <property type="entry name" value="glyS"/>
    <property type="match status" value="1"/>
</dbReference>
<dbReference type="PANTHER" id="PTHR30075:SF2">
    <property type="entry name" value="GLYCINE--TRNA LIGASE, CHLOROPLASTIC_MITOCHONDRIAL 2"/>
    <property type="match status" value="1"/>
</dbReference>
<dbReference type="PANTHER" id="PTHR30075">
    <property type="entry name" value="GLYCYL-TRNA SYNTHETASE"/>
    <property type="match status" value="1"/>
</dbReference>
<dbReference type="Pfam" id="PF05746">
    <property type="entry name" value="DALR_1"/>
    <property type="match status" value="1"/>
</dbReference>
<dbReference type="Pfam" id="PF02092">
    <property type="entry name" value="tRNA_synt_2f"/>
    <property type="match status" value="1"/>
</dbReference>
<dbReference type="PRINTS" id="PR01045">
    <property type="entry name" value="TRNASYNTHGB"/>
</dbReference>
<dbReference type="SUPFAM" id="SSF109604">
    <property type="entry name" value="HD-domain/PDEase-like"/>
    <property type="match status" value="1"/>
</dbReference>
<dbReference type="PROSITE" id="PS50861">
    <property type="entry name" value="AA_TRNA_LIGASE_II_GLYAB"/>
    <property type="match status" value="1"/>
</dbReference>
<sequence>MAKEFLIELGTEELPPTQLRTLAEAFAANFEAELKGAELAHEGVKWFAAPRRLALKVAALAESQSDKVVEKRGPAVSAAFDAEGNPTKAAQGWARGCGITVDQADRMVTDKGEWLLFKQEVKGQPTSEIVVELAAKALANLPIAKPMRWGNKTTQFIRPVKTLTMLMGSDLIEGEILGVASSRTIRGHRFMGEKEFTIDSAEQYPAILEERGKVMADYEARKAIILADAQKAAAAVGGIADLEDDLVEEVTSLVEWPVVLTAKFEEEFLKVPSEALVYTMKGDQKYFPVYDENKKLLPNFIFVSNIESKEPRYVIEGNEKVVRPRLADAEFFFNTDRKRPLIDRLPELEQAIFQQQLGTIKDKTDRITELAGYIAEQIGADVEKSKRAGLLAKCDLMTSMVFEFTDTQGVMGMHYARHDGEAEEVAVALNEQYMPRFAGDELPSNGVSTAVAMADKLDTIVGIFGIGQAPKGSDPFALRRASLGVLRIIVEYGYNLDLVDLVAKAKSLFGDRLTNDNVEQDVIEFMLGRFRAWYQDEGFSVDIIQAVLARRPTKPADFDQRVKAVSHFRELEAAESLAAANKRVGNILAKFDGELAEEIDLALLQEDAEKALAESVEVMTEALEPAFATGNYQEALSKLADLREPVDAFFDNVMVMADDEALKKNRLTLLNNLRNLFLQIADISLLQK</sequence>
<organism>
    <name type="scientific">Vibrio parahaemolyticus serotype O3:K6 (strain RIMD 2210633)</name>
    <dbReference type="NCBI Taxonomy" id="223926"/>
    <lineage>
        <taxon>Bacteria</taxon>
        <taxon>Pseudomonadati</taxon>
        <taxon>Pseudomonadota</taxon>
        <taxon>Gammaproteobacteria</taxon>
        <taxon>Vibrionales</taxon>
        <taxon>Vibrionaceae</taxon>
        <taxon>Vibrio</taxon>
    </lineage>
</organism>
<name>SYGB_VIBPA</name>
<feature type="chain" id="PRO_0000072936" description="Glycine--tRNA ligase beta subunit">
    <location>
        <begin position="1"/>
        <end position="688"/>
    </location>
</feature>
<keyword id="KW-0030">Aminoacyl-tRNA synthetase</keyword>
<keyword id="KW-0067">ATP-binding</keyword>
<keyword id="KW-0963">Cytoplasm</keyword>
<keyword id="KW-0436">Ligase</keyword>
<keyword id="KW-0547">Nucleotide-binding</keyword>
<keyword id="KW-0648">Protein biosynthesis</keyword>
<reference key="1">
    <citation type="journal article" date="2003" name="Lancet">
        <title>Genome sequence of Vibrio parahaemolyticus: a pathogenic mechanism distinct from that of V. cholerae.</title>
        <authorList>
            <person name="Makino K."/>
            <person name="Oshima K."/>
            <person name="Kurokawa K."/>
            <person name="Yokoyama K."/>
            <person name="Uda T."/>
            <person name="Tagomori K."/>
            <person name="Iijima Y."/>
            <person name="Najima M."/>
            <person name="Nakano M."/>
            <person name="Yamashita A."/>
            <person name="Kubota Y."/>
            <person name="Kimura S."/>
            <person name="Yasunaga T."/>
            <person name="Honda T."/>
            <person name="Shinagawa H."/>
            <person name="Hattori M."/>
            <person name="Iida T."/>
        </authorList>
    </citation>
    <scope>NUCLEOTIDE SEQUENCE [LARGE SCALE GENOMIC DNA]</scope>
    <source>
        <strain>RIMD 2210633</strain>
    </source>
</reference>
<proteinExistence type="inferred from homology"/>
<evidence type="ECO:0000255" key="1">
    <source>
        <dbReference type="HAMAP-Rule" id="MF_00255"/>
    </source>
</evidence>